<protein>
    <recommendedName>
        <fullName evidence="1">Acyl-[acyl-carrier-protein]--UDP-N-acetylglucosamine O-acyltransferase</fullName>
        <shortName evidence="1">UDP-N-acetylglucosamine acyltransferase</shortName>
        <ecNumber evidence="1">2.3.1.129</ecNumber>
    </recommendedName>
</protein>
<feature type="chain" id="PRO_0000302585" description="Acyl-[acyl-carrier-protein]--UDP-N-acetylglucosamine O-acyltransferase">
    <location>
        <begin position="1"/>
        <end position="258"/>
    </location>
</feature>
<sequence length="258" mass="28010">MSLIDPRAIIDPSARLAADVQVGPWSIVGAEVEIGEGTVIGPHVVLKGPTKIGKHNRIYQFSSVGEDTPDLKYKGEPTRLVIGDHNVIREGVTIHRGTVQDRAETTIGDHNLIMAYAHIGHDSVIGNHCILVNNTALAGHVHVDDWAILSGYTLVHQYCRIGAHSFSGMGSAIGKDVPAYVTVFGNPAEARSMNFEGMRRRGFSSEAIHALRRAYKVVYRQGHTVEEALAELAESAAQFPEVAVFRDSIQSATRGITR</sequence>
<reference key="1">
    <citation type="journal article" date="2006" name="Genome Biol.">
        <title>Genomic analysis reveals that Pseudomonas aeruginosa virulence is combinatorial.</title>
        <authorList>
            <person name="Lee D.G."/>
            <person name="Urbach J.M."/>
            <person name="Wu G."/>
            <person name="Liberati N.T."/>
            <person name="Feinbaum R.L."/>
            <person name="Miyata S."/>
            <person name="Diggins L.T."/>
            <person name="He J."/>
            <person name="Saucier M."/>
            <person name="Deziel E."/>
            <person name="Friedman L."/>
            <person name="Li L."/>
            <person name="Grills G."/>
            <person name="Montgomery K."/>
            <person name="Kucherlapati R."/>
            <person name="Rahme L.G."/>
            <person name="Ausubel F.M."/>
        </authorList>
    </citation>
    <scope>NUCLEOTIDE SEQUENCE [LARGE SCALE GENOMIC DNA]</scope>
    <source>
        <strain>UCBPP-PA14</strain>
    </source>
</reference>
<evidence type="ECO:0000255" key="1">
    <source>
        <dbReference type="HAMAP-Rule" id="MF_00387"/>
    </source>
</evidence>
<proteinExistence type="inferred from homology"/>
<accession>Q02RB6</accession>
<comment type="function">
    <text evidence="1">Involved in the biosynthesis of lipid A, a phosphorylated glycolipid that anchors the lipopolysaccharide to the outer membrane of the cell.</text>
</comment>
<comment type="catalytic activity">
    <reaction evidence="1">
        <text>a (3R)-hydroxyacyl-[ACP] + UDP-N-acetyl-alpha-D-glucosamine = a UDP-3-O-[(3R)-3-hydroxyacyl]-N-acetyl-alpha-D-glucosamine + holo-[ACP]</text>
        <dbReference type="Rhea" id="RHEA:67812"/>
        <dbReference type="Rhea" id="RHEA-COMP:9685"/>
        <dbReference type="Rhea" id="RHEA-COMP:9945"/>
        <dbReference type="ChEBI" id="CHEBI:57705"/>
        <dbReference type="ChEBI" id="CHEBI:64479"/>
        <dbReference type="ChEBI" id="CHEBI:78827"/>
        <dbReference type="ChEBI" id="CHEBI:173225"/>
        <dbReference type="EC" id="2.3.1.129"/>
    </reaction>
</comment>
<comment type="pathway">
    <text evidence="1">Glycolipid biosynthesis; lipid IV(A) biosynthesis; lipid IV(A) from (3R)-3-hydroxytetradecanoyl-[acyl-carrier-protein] and UDP-N-acetyl-alpha-D-glucosamine: step 1/6.</text>
</comment>
<comment type="subunit">
    <text evidence="1">Homotrimer.</text>
</comment>
<comment type="subcellular location">
    <subcellularLocation>
        <location evidence="1">Cytoplasm</location>
    </subcellularLocation>
</comment>
<comment type="similarity">
    <text evidence="1">Belongs to the transferase hexapeptide repeat family. LpxA subfamily.</text>
</comment>
<gene>
    <name evidence="1" type="primary">lpxA</name>
    <name type="ordered locus">PA14_17210</name>
</gene>
<dbReference type="EC" id="2.3.1.129" evidence="1"/>
<dbReference type="EMBL" id="CP000438">
    <property type="protein sequence ID" value="ABJ12877.1"/>
    <property type="molecule type" value="Genomic_DNA"/>
</dbReference>
<dbReference type="RefSeq" id="WP_003092373.1">
    <property type="nucleotide sequence ID" value="NZ_CP034244.1"/>
</dbReference>
<dbReference type="SMR" id="Q02RB6"/>
<dbReference type="KEGG" id="pau:PA14_17210"/>
<dbReference type="PseudoCAP" id="PA14_17210"/>
<dbReference type="HOGENOM" id="CLU_061249_0_0_6"/>
<dbReference type="BioCyc" id="PAER208963:G1G74-1417-MONOMER"/>
<dbReference type="UniPathway" id="UPA00359">
    <property type="reaction ID" value="UER00477"/>
</dbReference>
<dbReference type="Proteomes" id="UP000000653">
    <property type="component" value="Chromosome"/>
</dbReference>
<dbReference type="GO" id="GO:0005737">
    <property type="term" value="C:cytoplasm"/>
    <property type="evidence" value="ECO:0007669"/>
    <property type="project" value="UniProtKB-SubCell"/>
</dbReference>
<dbReference type="GO" id="GO:0016020">
    <property type="term" value="C:membrane"/>
    <property type="evidence" value="ECO:0007669"/>
    <property type="project" value="GOC"/>
</dbReference>
<dbReference type="GO" id="GO:0008780">
    <property type="term" value="F:acyl-[acyl-carrier-protein]-UDP-N-acetylglucosamine O-acyltransferase activity"/>
    <property type="evidence" value="ECO:0007669"/>
    <property type="project" value="UniProtKB-UniRule"/>
</dbReference>
<dbReference type="GO" id="GO:0009245">
    <property type="term" value="P:lipid A biosynthetic process"/>
    <property type="evidence" value="ECO:0007669"/>
    <property type="project" value="UniProtKB-UniRule"/>
</dbReference>
<dbReference type="CDD" id="cd03351">
    <property type="entry name" value="LbH_UDP-GlcNAc_AT"/>
    <property type="match status" value="1"/>
</dbReference>
<dbReference type="FunFam" id="1.20.1180.10:FF:000001">
    <property type="entry name" value="Acyl-[acyl-carrier-protein]--UDP-N-acetylglucosamine O-acyltransferase"/>
    <property type="match status" value="1"/>
</dbReference>
<dbReference type="FunFam" id="2.160.10.10:FF:000003">
    <property type="entry name" value="Acyl-[acyl-carrier-protein]--UDP-N-acetylglucosamine O-acyltransferase"/>
    <property type="match status" value="1"/>
</dbReference>
<dbReference type="Gene3D" id="2.160.10.10">
    <property type="entry name" value="Hexapeptide repeat proteins"/>
    <property type="match status" value="1"/>
</dbReference>
<dbReference type="Gene3D" id="1.20.1180.10">
    <property type="entry name" value="Udp N-acetylglucosamine O-acyltransferase, C-terminal domain"/>
    <property type="match status" value="1"/>
</dbReference>
<dbReference type="HAMAP" id="MF_00387">
    <property type="entry name" value="LpxA"/>
    <property type="match status" value="1"/>
</dbReference>
<dbReference type="InterPro" id="IPR029098">
    <property type="entry name" value="Acetyltransf_C"/>
</dbReference>
<dbReference type="InterPro" id="IPR037157">
    <property type="entry name" value="Acetyltransf_C_sf"/>
</dbReference>
<dbReference type="InterPro" id="IPR001451">
    <property type="entry name" value="Hexapep"/>
</dbReference>
<dbReference type="InterPro" id="IPR018357">
    <property type="entry name" value="Hexapep_transf_CS"/>
</dbReference>
<dbReference type="InterPro" id="IPR010137">
    <property type="entry name" value="Lipid_A_LpxA"/>
</dbReference>
<dbReference type="InterPro" id="IPR011004">
    <property type="entry name" value="Trimer_LpxA-like_sf"/>
</dbReference>
<dbReference type="NCBIfam" id="TIGR01852">
    <property type="entry name" value="lipid_A_lpxA"/>
    <property type="match status" value="1"/>
</dbReference>
<dbReference type="NCBIfam" id="NF003657">
    <property type="entry name" value="PRK05289.1"/>
    <property type="match status" value="1"/>
</dbReference>
<dbReference type="PANTHER" id="PTHR43480">
    <property type="entry name" value="ACYL-[ACYL-CARRIER-PROTEIN]--UDP-N-ACETYLGLUCOSAMINE O-ACYLTRANSFERASE"/>
    <property type="match status" value="1"/>
</dbReference>
<dbReference type="PANTHER" id="PTHR43480:SF1">
    <property type="entry name" value="ACYL-[ACYL-CARRIER-PROTEIN]--UDP-N-ACETYLGLUCOSAMINE O-ACYLTRANSFERASE, MITOCHONDRIAL-RELATED"/>
    <property type="match status" value="1"/>
</dbReference>
<dbReference type="Pfam" id="PF13720">
    <property type="entry name" value="Acetyltransf_11"/>
    <property type="match status" value="1"/>
</dbReference>
<dbReference type="Pfam" id="PF00132">
    <property type="entry name" value="Hexapep"/>
    <property type="match status" value="2"/>
</dbReference>
<dbReference type="PIRSF" id="PIRSF000456">
    <property type="entry name" value="UDP-GlcNAc_acltr"/>
    <property type="match status" value="1"/>
</dbReference>
<dbReference type="SUPFAM" id="SSF51161">
    <property type="entry name" value="Trimeric LpxA-like enzymes"/>
    <property type="match status" value="1"/>
</dbReference>
<dbReference type="PROSITE" id="PS00101">
    <property type="entry name" value="HEXAPEP_TRANSFERASES"/>
    <property type="match status" value="1"/>
</dbReference>
<keyword id="KW-0012">Acyltransferase</keyword>
<keyword id="KW-0963">Cytoplasm</keyword>
<keyword id="KW-0441">Lipid A biosynthesis</keyword>
<keyword id="KW-0444">Lipid biosynthesis</keyword>
<keyword id="KW-0443">Lipid metabolism</keyword>
<keyword id="KW-0677">Repeat</keyword>
<keyword id="KW-0808">Transferase</keyword>
<name>LPXA_PSEAB</name>
<organism>
    <name type="scientific">Pseudomonas aeruginosa (strain UCBPP-PA14)</name>
    <dbReference type="NCBI Taxonomy" id="208963"/>
    <lineage>
        <taxon>Bacteria</taxon>
        <taxon>Pseudomonadati</taxon>
        <taxon>Pseudomonadota</taxon>
        <taxon>Gammaproteobacteria</taxon>
        <taxon>Pseudomonadales</taxon>
        <taxon>Pseudomonadaceae</taxon>
        <taxon>Pseudomonas</taxon>
    </lineage>
</organism>